<dbReference type="EC" id="3.1.-.-" evidence="1"/>
<dbReference type="EMBL" id="CP000503">
    <property type="protein sequence ID" value="ABM25631.1"/>
    <property type="molecule type" value="Genomic_DNA"/>
</dbReference>
<dbReference type="RefSeq" id="WP_011790086.1">
    <property type="nucleotide sequence ID" value="NC_008750.1"/>
</dbReference>
<dbReference type="SMR" id="A1RLT6"/>
<dbReference type="KEGG" id="shw:Sputw3181_2814"/>
<dbReference type="HOGENOM" id="CLU_004675_1_2_6"/>
<dbReference type="Proteomes" id="UP000002597">
    <property type="component" value="Chromosome"/>
</dbReference>
<dbReference type="GO" id="GO:0008409">
    <property type="term" value="F:5'-3' exonuclease activity"/>
    <property type="evidence" value="ECO:0007669"/>
    <property type="project" value="InterPro"/>
</dbReference>
<dbReference type="GO" id="GO:0017108">
    <property type="term" value="F:5'-flap endonuclease activity"/>
    <property type="evidence" value="ECO:0007669"/>
    <property type="project" value="UniProtKB-UniRule"/>
</dbReference>
<dbReference type="GO" id="GO:0003677">
    <property type="term" value="F:DNA binding"/>
    <property type="evidence" value="ECO:0007669"/>
    <property type="project" value="UniProtKB-UniRule"/>
</dbReference>
<dbReference type="GO" id="GO:0000287">
    <property type="term" value="F:magnesium ion binding"/>
    <property type="evidence" value="ECO:0007669"/>
    <property type="project" value="UniProtKB-UniRule"/>
</dbReference>
<dbReference type="GO" id="GO:0030955">
    <property type="term" value="F:potassium ion binding"/>
    <property type="evidence" value="ECO:0007669"/>
    <property type="project" value="UniProtKB-UniRule"/>
</dbReference>
<dbReference type="GO" id="GO:0033567">
    <property type="term" value="P:DNA replication, Okazaki fragment processing"/>
    <property type="evidence" value="ECO:0007669"/>
    <property type="project" value="UniProtKB-UniRule"/>
</dbReference>
<dbReference type="CDD" id="cd09898">
    <property type="entry name" value="H3TH_53EXO"/>
    <property type="match status" value="1"/>
</dbReference>
<dbReference type="CDD" id="cd09859">
    <property type="entry name" value="PIN_53EXO"/>
    <property type="match status" value="1"/>
</dbReference>
<dbReference type="FunFam" id="1.10.150.20:FF:000003">
    <property type="entry name" value="DNA polymerase I"/>
    <property type="match status" value="1"/>
</dbReference>
<dbReference type="Gene3D" id="1.10.150.20">
    <property type="entry name" value="5' to 3' exonuclease, C-terminal subdomain"/>
    <property type="match status" value="1"/>
</dbReference>
<dbReference type="Gene3D" id="3.40.50.1010">
    <property type="entry name" value="5'-nuclease"/>
    <property type="match status" value="1"/>
</dbReference>
<dbReference type="HAMAP" id="MF_01192">
    <property type="entry name" value="Xni"/>
    <property type="match status" value="1"/>
</dbReference>
<dbReference type="InterPro" id="IPR020046">
    <property type="entry name" value="5-3_exonucl_a-hlix_arch_N"/>
</dbReference>
<dbReference type="InterPro" id="IPR002421">
    <property type="entry name" value="5-3_exonuclease"/>
</dbReference>
<dbReference type="InterPro" id="IPR036279">
    <property type="entry name" value="5-3_exonuclease_C_sf"/>
</dbReference>
<dbReference type="InterPro" id="IPR020045">
    <property type="entry name" value="DNA_polI_H3TH"/>
</dbReference>
<dbReference type="InterPro" id="IPR038969">
    <property type="entry name" value="FEN"/>
</dbReference>
<dbReference type="InterPro" id="IPR008918">
    <property type="entry name" value="HhH2"/>
</dbReference>
<dbReference type="InterPro" id="IPR029060">
    <property type="entry name" value="PIN-like_dom_sf"/>
</dbReference>
<dbReference type="InterPro" id="IPR022895">
    <property type="entry name" value="Xni"/>
</dbReference>
<dbReference type="NCBIfam" id="NF007017">
    <property type="entry name" value="PRK09482.1"/>
    <property type="match status" value="1"/>
</dbReference>
<dbReference type="PANTHER" id="PTHR42646:SF2">
    <property type="entry name" value="5'-3' EXONUCLEASE FAMILY PROTEIN"/>
    <property type="match status" value="1"/>
</dbReference>
<dbReference type="PANTHER" id="PTHR42646">
    <property type="entry name" value="FLAP ENDONUCLEASE XNI"/>
    <property type="match status" value="1"/>
</dbReference>
<dbReference type="Pfam" id="PF01367">
    <property type="entry name" value="5_3_exonuc"/>
    <property type="match status" value="1"/>
</dbReference>
<dbReference type="Pfam" id="PF02739">
    <property type="entry name" value="5_3_exonuc_N"/>
    <property type="match status" value="1"/>
</dbReference>
<dbReference type="SMART" id="SM00475">
    <property type="entry name" value="53EXOc"/>
    <property type="match status" value="1"/>
</dbReference>
<dbReference type="SMART" id="SM00279">
    <property type="entry name" value="HhH2"/>
    <property type="match status" value="1"/>
</dbReference>
<dbReference type="SUPFAM" id="SSF47807">
    <property type="entry name" value="5' to 3' exonuclease, C-terminal subdomain"/>
    <property type="match status" value="1"/>
</dbReference>
<dbReference type="SUPFAM" id="SSF88723">
    <property type="entry name" value="PIN domain-like"/>
    <property type="match status" value="1"/>
</dbReference>
<gene>
    <name evidence="1" type="primary">xni</name>
    <name evidence="1" type="synonym">ygdG</name>
    <name type="ordered locus">Sputw3181_2814</name>
</gene>
<organism>
    <name type="scientific">Shewanella sp. (strain W3-18-1)</name>
    <dbReference type="NCBI Taxonomy" id="351745"/>
    <lineage>
        <taxon>Bacteria</taxon>
        <taxon>Pseudomonadati</taxon>
        <taxon>Pseudomonadota</taxon>
        <taxon>Gammaproteobacteria</taxon>
        <taxon>Alteromonadales</taxon>
        <taxon>Shewanellaceae</taxon>
        <taxon>Shewanella</taxon>
    </lineage>
</organism>
<name>XNI_SHESW</name>
<sequence>MNKFLIIDGLNLVRRIYAAIPNENDMESLKERVTSACTKLLRVHHPSHIAIVWDGDEISWRKQLYPDYKKGRKPMPEPLAQGLRALQEHLATLNIASIYAAAEADDVIATLAVKTAKAQGEAIIVSTDKGFSQLNHPRITQWDHFNQQYLDIAALEQKLGVDRSQFLDLMALAGDSGNKIPGIAGIGPKSAAELLKTFRTLSTLFSSLPNLGAKQAKKLAEGKEMARLSYKLAQLQTDLPLNINLKDFRANSTPHPAPNIEQ</sequence>
<comment type="function">
    <text evidence="1">Has flap endonuclease activity. During DNA replication, flap endonucleases cleave the 5'-overhanging flap structure that is generated by displacement synthesis when DNA polymerase encounters the 5'-end of a downstream Okazaki fragment.</text>
</comment>
<comment type="cofactor">
    <cofactor evidence="1">
        <name>Mg(2+)</name>
        <dbReference type="ChEBI" id="CHEBI:18420"/>
    </cofactor>
    <text evidence="1">Binds 2 Mg(2+) per subunit. Only one magnesium ion has a direct interaction with the protein, the other interactions are indirect.</text>
</comment>
<comment type="cofactor">
    <cofactor evidence="1">
        <name>K(+)</name>
        <dbReference type="ChEBI" id="CHEBI:29103"/>
    </cofactor>
    <text evidence="1">Binds 1 K(+) per subunit. The potassium ion strongly increases the affinity for DNA.</text>
</comment>
<comment type="similarity">
    <text evidence="1">Belongs to the Xni family.</text>
</comment>
<accession>A1RLT6</accession>
<reference key="1">
    <citation type="submission" date="2006-12" db="EMBL/GenBank/DDBJ databases">
        <title>Complete sequence of Shewanella sp. W3-18-1.</title>
        <authorList>
            <consortium name="US DOE Joint Genome Institute"/>
            <person name="Copeland A."/>
            <person name="Lucas S."/>
            <person name="Lapidus A."/>
            <person name="Barry K."/>
            <person name="Detter J.C."/>
            <person name="Glavina del Rio T."/>
            <person name="Hammon N."/>
            <person name="Israni S."/>
            <person name="Dalin E."/>
            <person name="Tice H."/>
            <person name="Pitluck S."/>
            <person name="Chain P."/>
            <person name="Malfatti S."/>
            <person name="Shin M."/>
            <person name="Vergez L."/>
            <person name="Schmutz J."/>
            <person name="Larimer F."/>
            <person name="Land M."/>
            <person name="Hauser L."/>
            <person name="Kyrpides N."/>
            <person name="Lykidis A."/>
            <person name="Tiedje J."/>
            <person name="Richardson P."/>
        </authorList>
    </citation>
    <scope>NUCLEOTIDE SEQUENCE [LARGE SCALE GENOMIC DNA]</scope>
    <source>
        <strain>W3-18-1</strain>
    </source>
</reference>
<proteinExistence type="inferred from homology"/>
<feature type="chain" id="PRO_0000297881" description="Flap endonuclease Xni">
    <location>
        <begin position="1"/>
        <end position="262"/>
    </location>
</feature>
<feature type="domain" description="5'-3' exonuclease" evidence="1">
    <location>
        <begin position="164"/>
        <end position="251"/>
    </location>
</feature>
<feature type="region of interest" description="Interaction with DNA" evidence="1">
    <location>
        <begin position="185"/>
        <end position="190"/>
    </location>
</feature>
<feature type="binding site" evidence="1">
    <location>
        <position position="105"/>
    </location>
    <ligand>
        <name>Mg(2+)</name>
        <dbReference type="ChEBI" id="CHEBI:18420"/>
    </ligand>
</feature>
<feature type="binding site" evidence="1">
    <location>
        <position position="172"/>
    </location>
    <ligand>
        <name>K(+)</name>
        <dbReference type="ChEBI" id="CHEBI:29103"/>
    </ligand>
</feature>
<feature type="binding site" evidence="1">
    <location>
        <position position="173"/>
    </location>
    <ligand>
        <name>K(+)</name>
        <dbReference type="ChEBI" id="CHEBI:29103"/>
    </ligand>
</feature>
<feature type="binding site" evidence="1">
    <location>
        <position position="181"/>
    </location>
    <ligand>
        <name>K(+)</name>
        <dbReference type="ChEBI" id="CHEBI:29103"/>
    </ligand>
</feature>
<feature type="binding site" evidence="1">
    <location>
        <position position="183"/>
    </location>
    <ligand>
        <name>K(+)</name>
        <dbReference type="ChEBI" id="CHEBI:29103"/>
    </ligand>
</feature>
<feature type="binding site" evidence="1">
    <location>
        <position position="186"/>
    </location>
    <ligand>
        <name>K(+)</name>
        <dbReference type="ChEBI" id="CHEBI:29103"/>
    </ligand>
</feature>
<keyword id="KW-0238">DNA-binding</keyword>
<keyword id="KW-0255">Endonuclease</keyword>
<keyword id="KW-0378">Hydrolase</keyword>
<keyword id="KW-0460">Magnesium</keyword>
<keyword id="KW-0479">Metal-binding</keyword>
<keyword id="KW-0540">Nuclease</keyword>
<keyword id="KW-0630">Potassium</keyword>
<evidence type="ECO:0000255" key="1">
    <source>
        <dbReference type="HAMAP-Rule" id="MF_01192"/>
    </source>
</evidence>
<protein>
    <recommendedName>
        <fullName evidence="1">Flap endonuclease Xni</fullName>
        <shortName evidence="1">FEN</shortName>
        <ecNumber evidence="1">3.1.-.-</ecNumber>
    </recommendedName>
</protein>